<gene>
    <name type="primary">Ifi203</name>
</gene>
<feature type="chain" id="PRO_0000153720" description="Interferon-activable protein 203">
    <location>
        <begin position="1"/>
        <end position="408"/>
    </location>
</feature>
<feature type="domain" description="Pyrin" evidence="1">
    <location>
        <begin position="1"/>
        <end position="87"/>
    </location>
</feature>
<feature type="domain" description="HIN-200" evidence="2">
    <location>
        <begin position="190"/>
        <end position="388"/>
    </location>
</feature>
<feature type="region of interest" description="Disordered" evidence="3">
    <location>
        <begin position="84"/>
        <end position="208"/>
    </location>
</feature>
<feature type="compositionally biased region" description="Basic residues" evidence="3">
    <location>
        <begin position="92"/>
        <end position="102"/>
    </location>
</feature>
<feature type="compositionally biased region" description="Polar residues" evidence="3">
    <location>
        <begin position="150"/>
        <end position="159"/>
    </location>
</feature>
<feature type="splice variant" id="VSP_033652" description="In isoform 3." evidence="5 6">
    <original>N</original>
    <variation>NKKNPVVASFLLASRASTSGAKTREQDILRHKQRPSRKGGFKTTFCERI</variation>
    <location>
        <position position="183"/>
    </location>
</feature>
<feature type="splice variant" id="VSP_033653" description="In isoform 2." evidence="6">
    <original>APRRGTV</original>
    <variation>VTLSYPQ</variation>
    <location>
        <begin position="185"/>
        <end position="191"/>
    </location>
</feature>
<feature type="splice variant" id="VSP_033654" description="In isoform 2." evidence="6">
    <location>
        <begin position="192"/>
        <end position="408"/>
    </location>
</feature>
<feature type="sequence conflict" description="In Ref. 2; BAE25996/BAC30542." evidence="7" ref="2">
    <original>M</original>
    <variation>I</variation>
    <location>
        <position position="51"/>
    </location>
</feature>
<feature type="sequence conflict" description="In Ref. 2; BAE25996/BAC30542." evidence="7" ref="2">
    <original>E</original>
    <variation>K</variation>
    <location>
        <position position="90"/>
    </location>
</feature>
<feature type="sequence conflict" description="In Ref. 2; BAE25996/BAC30542." evidence="7" ref="2">
    <original>K</original>
    <variation>E</variation>
    <location>
        <position position="93"/>
    </location>
</feature>
<feature type="sequence conflict" description="In Ref. 2; BAE41346." evidence="7" ref="2">
    <original>T</original>
    <variation>M</variation>
    <location>
        <position position="98"/>
    </location>
</feature>
<feature type="sequence conflict" description="In Ref. 2; BAE25996/BAC30542." evidence="7" ref="2">
    <original>I</original>
    <variation>N</variation>
    <location>
        <position position="116"/>
    </location>
</feature>
<feature type="sequence conflict" description="In Ref. 2; BAE25996/BAC30542." evidence="7" ref="2">
    <original>Y</original>
    <variation>N</variation>
    <location>
        <position position="121"/>
    </location>
</feature>
<feature type="sequence conflict" description="In Ref. 3; AAH08167." evidence="7" ref="3">
    <original>R</original>
    <variation>Q</variation>
    <location sequence="O35368-3">
        <position position="197"/>
    </location>
</feature>
<evidence type="ECO:0000255" key="1">
    <source>
        <dbReference type="PROSITE-ProRule" id="PRU00061"/>
    </source>
</evidence>
<evidence type="ECO:0000255" key="2">
    <source>
        <dbReference type="PROSITE-ProRule" id="PRU00106"/>
    </source>
</evidence>
<evidence type="ECO:0000256" key="3">
    <source>
        <dbReference type="SAM" id="MobiDB-lite"/>
    </source>
</evidence>
<evidence type="ECO:0000269" key="4">
    <source>
    </source>
</evidence>
<evidence type="ECO:0000303" key="5">
    <source>
    </source>
</evidence>
<evidence type="ECO:0000303" key="6">
    <source>
    </source>
</evidence>
<evidence type="ECO:0000305" key="7"/>
<protein>
    <recommendedName>
        <fullName>Interferon-activable protein 203</fullName>
        <shortName>Ifi-203</shortName>
    </recommendedName>
    <alternativeName>
        <fullName>Interferon-inducible protein p203</fullName>
    </alternativeName>
</protein>
<sequence>MAEYKNIVLLKGLENMEDYQFRTVKSLLRKELKLTKKMQEDYDRIQLADWMEDKFPKDAGLDKLIKVCEHIKDLKDLAKKLKTEKAKVQEKKKGKCKTAGKKKGQDELSSSESLFINKESYKSVPSSKKKRKQITKTEGGKKKKLTQEQAQLPETSGTNIKKEEDCLQNPHKSPPTPSSSSSNKAPRRGTVPKEPSREEGHHQGPKQVMVLKVTEPFTYDFEETKRMFHATVATETEFFRVKVFDTALMSKFIPGKIIAISHYIGCNGFLEIYRASCVSDVNINPTMIISNTLSESAIATPKISYLLSQAKGTFVNGEFVVFKKSERHECICYGIGDDTGKMAVVVYGRLTNVRCEPGSKLRLVCFELTSTKDVCLLRSVRHSYMQVINEGKPLNPDSVRRNSLEPYF</sequence>
<proteinExistence type="evidence at protein level"/>
<organism>
    <name type="scientific">Mus musculus</name>
    <name type="common">Mouse</name>
    <dbReference type="NCBI Taxonomy" id="10090"/>
    <lineage>
        <taxon>Eukaryota</taxon>
        <taxon>Metazoa</taxon>
        <taxon>Chordata</taxon>
        <taxon>Craniata</taxon>
        <taxon>Vertebrata</taxon>
        <taxon>Euteleostomi</taxon>
        <taxon>Mammalia</taxon>
        <taxon>Eutheria</taxon>
        <taxon>Euarchontoglires</taxon>
        <taxon>Glires</taxon>
        <taxon>Rodentia</taxon>
        <taxon>Myomorpha</taxon>
        <taxon>Muroidea</taxon>
        <taxon>Muridae</taxon>
        <taxon>Murinae</taxon>
        <taxon>Mus</taxon>
        <taxon>Mus</taxon>
    </lineage>
</organism>
<comment type="subcellular location">
    <subcellularLocation>
        <location evidence="4">Nucleus</location>
    </subcellularLocation>
</comment>
<comment type="alternative products">
    <event type="alternative splicing"/>
    <isoform>
        <id>O35368-1</id>
        <name>1</name>
        <sequence type="displayed"/>
    </isoform>
    <isoform>
        <id>O35368-2</id>
        <name>2</name>
        <sequence type="described" ref="VSP_033653 VSP_033654"/>
    </isoform>
    <isoform>
        <id>O35368-3</id>
        <name>3</name>
        <sequence type="described" ref="VSP_033652"/>
    </isoform>
</comment>
<comment type="tissue specificity">
    <text evidence="4">Constitutively expressed in the thymus, bone marrow and spleen. Isoform 1 and isoform 3 are present in liver (at protein level).</text>
</comment>
<comment type="induction">
    <molecule>Isoform 1</molecule>
    <text evidence="4">Induced by alpha interferon (at protein level).</text>
</comment>
<comment type="induction">
    <molecule>Isoform 3</molecule>
    <text evidence="4">Induced by alpha interferon (at protein level).</text>
</comment>
<comment type="similarity">
    <text evidence="7">Belongs to the HIN-200 family.</text>
</comment>
<comment type="sequence caution" evidence="7">
    <conflict type="erroneous initiation">
        <sequence resource="EMBL-CDS" id="BAE25996"/>
    </conflict>
</comment>
<accession>O35368</accession>
<accession>Q3T9I1</accession>
<accession>Q3TEA2</accession>
<accession>Q3TP57</accession>
<accession>Q3UMV2</accession>
<accession>Q8BYE5</accession>
<accession>Q91VV8</accession>
<keyword id="KW-0025">Alternative splicing</keyword>
<keyword id="KW-0539">Nucleus</keyword>
<keyword id="KW-1185">Reference proteome</keyword>
<name>IFI3_MOUSE</name>
<dbReference type="EMBL" id="AF022371">
    <property type="protein sequence ID" value="AAC53428.1"/>
    <property type="molecule type" value="mRNA"/>
</dbReference>
<dbReference type="EMBL" id="AK040214">
    <property type="protein sequence ID" value="BAC30542.1"/>
    <property type="molecule type" value="mRNA"/>
</dbReference>
<dbReference type="EMBL" id="AK144663">
    <property type="protein sequence ID" value="BAE25996.1"/>
    <property type="status" value="ALT_INIT"/>
    <property type="molecule type" value="mRNA"/>
</dbReference>
<dbReference type="EMBL" id="AK164695">
    <property type="protein sequence ID" value="BAE37880.1"/>
    <property type="molecule type" value="mRNA"/>
</dbReference>
<dbReference type="EMBL" id="AK169754">
    <property type="protein sequence ID" value="BAE41346.1"/>
    <property type="molecule type" value="mRNA"/>
</dbReference>
<dbReference type="EMBL" id="AK172505">
    <property type="protein sequence ID" value="BAE43039.1"/>
    <property type="molecule type" value="mRNA"/>
</dbReference>
<dbReference type="EMBL" id="BC008167">
    <property type="protein sequence ID" value="AAH08167.1"/>
    <property type="molecule type" value="mRNA"/>
</dbReference>
<dbReference type="RefSeq" id="NP_001289578.1">
    <property type="nucleotide sequence ID" value="NM_001302649.1"/>
</dbReference>
<dbReference type="RefSeq" id="NP_001289579.1">
    <property type="nucleotide sequence ID" value="NM_001302650.1"/>
</dbReference>
<dbReference type="RefSeq" id="NP_001289580.1">
    <property type="nucleotide sequence ID" value="NM_001302651.1"/>
</dbReference>
<dbReference type="SMR" id="O35368"/>
<dbReference type="FunCoup" id="O35368">
    <property type="interactions" value="134"/>
</dbReference>
<dbReference type="GlyGen" id="O35368">
    <property type="glycosylation" value="1 site"/>
</dbReference>
<dbReference type="iPTMnet" id="O35368"/>
<dbReference type="PhosphoSitePlus" id="O35368"/>
<dbReference type="jPOST" id="O35368"/>
<dbReference type="ProteomicsDB" id="273096">
    <molecule id="O35368-1"/>
</dbReference>
<dbReference type="ProteomicsDB" id="273097">
    <molecule id="O35368-2"/>
</dbReference>
<dbReference type="ProteomicsDB" id="273098">
    <molecule id="O35368-3"/>
</dbReference>
<dbReference type="Pumba" id="O35368"/>
<dbReference type="DNASU" id="15950"/>
<dbReference type="GeneID" id="15950"/>
<dbReference type="KEGG" id="mmu:15950"/>
<dbReference type="UCSC" id="uc007dsj.1">
    <molecule id="O35368-2"/>
    <property type="organism name" value="mouse"/>
</dbReference>
<dbReference type="AGR" id="MGI:96428"/>
<dbReference type="CTD" id="15950"/>
<dbReference type="MGI" id="MGI:96428">
    <property type="gene designation" value="Ifi203"/>
</dbReference>
<dbReference type="eggNOG" id="ENOG502QTQS">
    <property type="taxonomic scope" value="Eukaryota"/>
</dbReference>
<dbReference type="InParanoid" id="O35368"/>
<dbReference type="OrthoDB" id="9622064at2759"/>
<dbReference type="PhylomeDB" id="O35368"/>
<dbReference type="BioGRID-ORCS" id="15950">
    <property type="hits" value="2 hits in 76 CRISPR screens"/>
</dbReference>
<dbReference type="ChiTaRS" id="Ifi203">
    <property type="organism name" value="mouse"/>
</dbReference>
<dbReference type="PRO" id="PR:O35368"/>
<dbReference type="Proteomes" id="UP000000589">
    <property type="component" value="Unplaced"/>
</dbReference>
<dbReference type="RNAct" id="O35368">
    <property type="molecule type" value="protein"/>
</dbReference>
<dbReference type="GO" id="GO:0005634">
    <property type="term" value="C:nucleus"/>
    <property type="evidence" value="ECO:0007669"/>
    <property type="project" value="UniProtKB-SubCell"/>
</dbReference>
<dbReference type="GO" id="GO:0002218">
    <property type="term" value="P:activation of innate immune response"/>
    <property type="evidence" value="ECO:0007669"/>
    <property type="project" value="InterPro"/>
</dbReference>
<dbReference type="GO" id="GO:0035458">
    <property type="term" value="P:cellular response to interferon-beta"/>
    <property type="evidence" value="ECO:0000314"/>
    <property type="project" value="MGI"/>
</dbReference>
<dbReference type="CDD" id="cd08305">
    <property type="entry name" value="Pyrin"/>
    <property type="match status" value="1"/>
</dbReference>
<dbReference type="FunFam" id="2.40.50.140:FF:000500">
    <property type="entry name" value="Interferon-activable protein 202"/>
    <property type="match status" value="1"/>
</dbReference>
<dbReference type="FunFam" id="1.10.533.10:FF:000011">
    <property type="entry name" value="Myeloid cell nuclear differentiation antigen"/>
    <property type="match status" value="1"/>
</dbReference>
<dbReference type="FunFam" id="2.40.50.140:FF:000101">
    <property type="entry name" value="Myeloid cell nuclear differentiation antigen"/>
    <property type="match status" value="1"/>
</dbReference>
<dbReference type="Gene3D" id="1.10.533.10">
    <property type="entry name" value="Death Domain, Fas"/>
    <property type="match status" value="1"/>
</dbReference>
<dbReference type="Gene3D" id="2.40.50.140">
    <property type="entry name" value="Nucleic acid-binding proteins"/>
    <property type="match status" value="2"/>
</dbReference>
<dbReference type="InterPro" id="IPR004020">
    <property type="entry name" value="DAPIN"/>
</dbReference>
<dbReference type="InterPro" id="IPR011029">
    <property type="entry name" value="DEATH-like_dom_sf"/>
</dbReference>
<dbReference type="InterPro" id="IPR040205">
    <property type="entry name" value="HIN-200"/>
</dbReference>
<dbReference type="InterPro" id="IPR004021">
    <property type="entry name" value="HIN200/IF120x"/>
</dbReference>
<dbReference type="InterPro" id="IPR012340">
    <property type="entry name" value="NA-bd_OB-fold"/>
</dbReference>
<dbReference type="PANTHER" id="PTHR12200:SF24">
    <property type="entry name" value="INTERFERON ACTIVATED GENE 207-RELATED"/>
    <property type="match status" value="1"/>
</dbReference>
<dbReference type="PANTHER" id="PTHR12200">
    <property type="entry name" value="INTERFERON-INDUCIBLE PROTEIN AIM2 FAMILY MEMBER"/>
    <property type="match status" value="1"/>
</dbReference>
<dbReference type="Pfam" id="PF02760">
    <property type="entry name" value="HIN"/>
    <property type="match status" value="1"/>
</dbReference>
<dbReference type="Pfam" id="PF02758">
    <property type="entry name" value="PYRIN"/>
    <property type="match status" value="1"/>
</dbReference>
<dbReference type="SMART" id="SM01289">
    <property type="entry name" value="PYRIN"/>
    <property type="match status" value="1"/>
</dbReference>
<dbReference type="SUPFAM" id="SSF47986">
    <property type="entry name" value="DEATH domain"/>
    <property type="match status" value="1"/>
</dbReference>
<dbReference type="SUPFAM" id="SSF159141">
    <property type="entry name" value="HIN-2000 domain-like"/>
    <property type="match status" value="2"/>
</dbReference>
<dbReference type="PROSITE" id="PS50824">
    <property type="entry name" value="DAPIN"/>
    <property type="match status" value="1"/>
</dbReference>
<dbReference type="PROSITE" id="PS50834">
    <property type="entry name" value="HIN_200"/>
    <property type="match status" value="1"/>
</dbReference>
<reference key="1">
    <citation type="journal article" date="1997" name="Eur. J. Biochem.">
        <title>Molecular cloning and expression of an interferon-inducible protein encoded by gene 203 from the gene 200 cluster.</title>
        <authorList>
            <person name="Gribaudo G."/>
            <person name="Ravaglia S."/>
            <person name="Guandalini L."/>
            <person name="Riera L."/>
            <person name="Gariglio M."/>
            <person name="Landolfo S."/>
        </authorList>
    </citation>
    <scope>NUCLEOTIDE SEQUENCE [MRNA] (ISOFORM 1)</scope>
    <source>
        <strain>BALB/cJ</strain>
        <tissue>Fibroblast</tissue>
    </source>
</reference>
<reference key="2">
    <citation type="journal article" date="2005" name="Science">
        <title>The transcriptional landscape of the mammalian genome.</title>
        <authorList>
            <person name="Carninci P."/>
            <person name="Kasukawa T."/>
            <person name="Katayama S."/>
            <person name="Gough J."/>
            <person name="Frith M.C."/>
            <person name="Maeda N."/>
            <person name="Oyama R."/>
            <person name="Ravasi T."/>
            <person name="Lenhard B."/>
            <person name="Wells C."/>
            <person name="Kodzius R."/>
            <person name="Shimokawa K."/>
            <person name="Bajic V.B."/>
            <person name="Brenner S.E."/>
            <person name="Batalov S."/>
            <person name="Forrest A.R."/>
            <person name="Zavolan M."/>
            <person name="Davis M.J."/>
            <person name="Wilming L.G."/>
            <person name="Aidinis V."/>
            <person name="Allen J.E."/>
            <person name="Ambesi-Impiombato A."/>
            <person name="Apweiler R."/>
            <person name="Aturaliya R.N."/>
            <person name="Bailey T.L."/>
            <person name="Bansal M."/>
            <person name="Baxter L."/>
            <person name="Beisel K.W."/>
            <person name="Bersano T."/>
            <person name="Bono H."/>
            <person name="Chalk A.M."/>
            <person name="Chiu K.P."/>
            <person name="Choudhary V."/>
            <person name="Christoffels A."/>
            <person name="Clutterbuck D.R."/>
            <person name="Crowe M.L."/>
            <person name="Dalla E."/>
            <person name="Dalrymple B.P."/>
            <person name="de Bono B."/>
            <person name="Della Gatta G."/>
            <person name="di Bernardo D."/>
            <person name="Down T."/>
            <person name="Engstrom P."/>
            <person name="Fagiolini M."/>
            <person name="Faulkner G."/>
            <person name="Fletcher C.F."/>
            <person name="Fukushima T."/>
            <person name="Furuno M."/>
            <person name="Futaki S."/>
            <person name="Gariboldi M."/>
            <person name="Georgii-Hemming P."/>
            <person name="Gingeras T.R."/>
            <person name="Gojobori T."/>
            <person name="Green R.E."/>
            <person name="Gustincich S."/>
            <person name="Harbers M."/>
            <person name="Hayashi Y."/>
            <person name="Hensch T.K."/>
            <person name="Hirokawa N."/>
            <person name="Hill D."/>
            <person name="Huminiecki L."/>
            <person name="Iacono M."/>
            <person name="Ikeo K."/>
            <person name="Iwama A."/>
            <person name="Ishikawa T."/>
            <person name="Jakt M."/>
            <person name="Kanapin A."/>
            <person name="Katoh M."/>
            <person name="Kawasawa Y."/>
            <person name="Kelso J."/>
            <person name="Kitamura H."/>
            <person name="Kitano H."/>
            <person name="Kollias G."/>
            <person name="Krishnan S.P."/>
            <person name="Kruger A."/>
            <person name="Kummerfeld S.K."/>
            <person name="Kurochkin I.V."/>
            <person name="Lareau L.F."/>
            <person name="Lazarevic D."/>
            <person name="Lipovich L."/>
            <person name="Liu J."/>
            <person name="Liuni S."/>
            <person name="McWilliam S."/>
            <person name="Madan Babu M."/>
            <person name="Madera M."/>
            <person name="Marchionni L."/>
            <person name="Matsuda H."/>
            <person name="Matsuzawa S."/>
            <person name="Miki H."/>
            <person name="Mignone F."/>
            <person name="Miyake S."/>
            <person name="Morris K."/>
            <person name="Mottagui-Tabar S."/>
            <person name="Mulder N."/>
            <person name="Nakano N."/>
            <person name="Nakauchi H."/>
            <person name="Ng P."/>
            <person name="Nilsson R."/>
            <person name="Nishiguchi S."/>
            <person name="Nishikawa S."/>
            <person name="Nori F."/>
            <person name="Ohara O."/>
            <person name="Okazaki Y."/>
            <person name="Orlando V."/>
            <person name="Pang K.C."/>
            <person name="Pavan W.J."/>
            <person name="Pavesi G."/>
            <person name="Pesole G."/>
            <person name="Petrovsky N."/>
            <person name="Piazza S."/>
            <person name="Reed J."/>
            <person name="Reid J.F."/>
            <person name="Ring B.Z."/>
            <person name="Ringwald M."/>
            <person name="Rost B."/>
            <person name="Ruan Y."/>
            <person name="Salzberg S.L."/>
            <person name="Sandelin A."/>
            <person name="Schneider C."/>
            <person name="Schoenbach C."/>
            <person name="Sekiguchi K."/>
            <person name="Semple C.A."/>
            <person name="Seno S."/>
            <person name="Sessa L."/>
            <person name="Sheng Y."/>
            <person name="Shibata Y."/>
            <person name="Shimada H."/>
            <person name="Shimada K."/>
            <person name="Silva D."/>
            <person name="Sinclair B."/>
            <person name="Sperling S."/>
            <person name="Stupka E."/>
            <person name="Sugiura K."/>
            <person name="Sultana R."/>
            <person name="Takenaka Y."/>
            <person name="Taki K."/>
            <person name="Tammoja K."/>
            <person name="Tan S.L."/>
            <person name="Tang S."/>
            <person name="Taylor M.S."/>
            <person name="Tegner J."/>
            <person name="Teichmann S.A."/>
            <person name="Ueda H.R."/>
            <person name="van Nimwegen E."/>
            <person name="Verardo R."/>
            <person name="Wei C.L."/>
            <person name="Yagi K."/>
            <person name="Yamanishi H."/>
            <person name="Zabarovsky E."/>
            <person name="Zhu S."/>
            <person name="Zimmer A."/>
            <person name="Hide W."/>
            <person name="Bult C."/>
            <person name="Grimmond S.M."/>
            <person name="Teasdale R.D."/>
            <person name="Liu E.T."/>
            <person name="Brusic V."/>
            <person name="Quackenbush J."/>
            <person name="Wahlestedt C."/>
            <person name="Mattick J.S."/>
            <person name="Hume D.A."/>
            <person name="Kai C."/>
            <person name="Sasaki D."/>
            <person name="Tomaru Y."/>
            <person name="Fukuda S."/>
            <person name="Kanamori-Katayama M."/>
            <person name="Suzuki M."/>
            <person name="Aoki J."/>
            <person name="Arakawa T."/>
            <person name="Iida J."/>
            <person name="Imamura K."/>
            <person name="Itoh M."/>
            <person name="Kato T."/>
            <person name="Kawaji H."/>
            <person name="Kawagashira N."/>
            <person name="Kawashima T."/>
            <person name="Kojima M."/>
            <person name="Kondo S."/>
            <person name="Konno H."/>
            <person name="Nakano K."/>
            <person name="Ninomiya N."/>
            <person name="Nishio T."/>
            <person name="Okada M."/>
            <person name="Plessy C."/>
            <person name="Shibata K."/>
            <person name="Shiraki T."/>
            <person name="Suzuki S."/>
            <person name="Tagami M."/>
            <person name="Waki K."/>
            <person name="Watahiki A."/>
            <person name="Okamura-Oho Y."/>
            <person name="Suzuki H."/>
            <person name="Kawai J."/>
            <person name="Hayashizaki Y."/>
        </authorList>
    </citation>
    <scope>NUCLEOTIDE SEQUENCE [LARGE SCALE MRNA] (ISOFORMS 2 AND 3)</scope>
    <source>
        <strain>C57BL/6J</strain>
        <strain>NOD</strain>
        <tissue>Kidney</tissue>
        <tissue>Lung</tissue>
        <tissue>Spleen</tissue>
        <tissue>Thymus</tissue>
    </source>
</reference>
<reference key="3">
    <citation type="journal article" date="2004" name="Genome Res.">
        <title>The status, quality, and expansion of the NIH full-length cDNA project: the Mammalian Gene Collection (MGC).</title>
        <authorList>
            <consortium name="The MGC Project Team"/>
        </authorList>
    </citation>
    <scope>NUCLEOTIDE SEQUENCE [LARGE SCALE MRNA] (ISOFORM 3)</scope>
    <source>
        <strain>NMRI</strain>
        <tissue>Mammary tumor</tissue>
    </source>
</reference>
<reference key="4">
    <citation type="journal article" date="2008" name="Front. Biosci.">
        <title>Multiple splicing results in at least two p203 proteins that are expressed in the liver and down-regulated during liver regeneration.</title>
        <authorList>
            <person name="Zhang Y."/>
            <person name="Tian Q."/>
            <person name="Du Y."/>
            <person name="Cao H."/>
            <person name="Lengyel P."/>
            <person name="Kong W."/>
        </authorList>
    </citation>
    <scope>INDUCTION</scope>
    <scope>TISSUE SPECIFICITY</scope>
    <scope>SUBCELLULAR LOCATION</scope>
</reference>
<reference key="5">
    <citation type="journal article" date="2010" name="Cell">
        <title>A tissue-specific atlas of mouse protein phosphorylation and expression.</title>
        <authorList>
            <person name="Huttlin E.L."/>
            <person name="Jedrychowski M.P."/>
            <person name="Elias J.E."/>
            <person name="Goswami T."/>
            <person name="Rad R."/>
            <person name="Beausoleil S.A."/>
            <person name="Villen J."/>
            <person name="Haas W."/>
            <person name="Sowa M.E."/>
            <person name="Gygi S.P."/>
        </authorList>
    </citation>
    <scope>IDENTIFICATION BY MASS SPECTROMETRY [LARGE SCALE ANALYSIS]</scope>
    <source>
        <tissue>Spleen</tissue>
    </source>
</reference>